<feature type="chain" id="PRO_0000411331" description="Elongation factor P">
    <location>
        <begin position="1"/>
        <end position="185"/>
    </location>
</feature>
<sequence length="185" mass="20467">MIEASKLKAGMTFEAEGKLIRVLEASHHKPGKGNTIMRMKLRDVRTGSTFDTTYRPDEKFEQAIIETVPAQYLYKMDDTAYFMNTDTYDQYEIPVANVEQELLYILENSDVKIQFYGSEVIGVTVPTTVELTVAETQPSIKGATVTGSGKPATLETGLVVNVPDFIEAGQKLIINTAEGTYVSRA</sequence>
<gene>
    <name type="primary">efp</name>
    <name type="ordered locus">SPs0293</name>
</gene>
<dbReference type="EMBL" id="BA000034">
    <property type="protein sequence ID" value="BAC63388.1"/>
    <property type="molecule type" value="Genomic_DNA"/>
</dbReference>
<dbReference type="RefSeq" id="WP_002988496.1">
    <property type="nucleotide sequence ID" value="NC_004606.1"/>
</dbReference>
<dbReference type="SMR" id="P0DA87"/>
<dbReference type="GeneID" id="69900351"/>
<dbReference type="KEGG" id="sps:SPs0293"/>
<dbReference type="HOGENOM" id="CLU_074944_3_0_9"/>
<dbReference type="UniPathway" id="UPA00345"/>
<dbReference type="GO" id="GO:0005737">
    <property type="term" value="C:cytoplasm"/>
    <property type="evidence" value="ECO:0007669"/>
    <property type="project" value="UniProtKB-SubCell"/>
</dbReference>
<dbReference type="GO" id="GO:0003746">
    <property type="term" value="F:translation elongation factor activity"/>
    <property type="evidence" value="ECO:0007669"/>
    <property type="project" value="UniProtKB-UniRule"/>
</dbReference>
<dbReference type="GO" id="GO:0043043">
    <property type="term" value="P:peptide biosynthetic process"/>
    <property type="evidence" value="ECO:0007669"/>
    <property type="project" value="InterPro"/>
</dbReference>
<dbReference type="CDD" id="cd04470">
    <property type="entry name" value="S1_EF-P_repeat_1"/>
    <property type="match status" value="1"/>
</dbReference>
<dbReference type="CDD" id="cd05794">
    <property type="entry name" value="S1_EF-P_repeat_2"/>
    <property type="match status" value="1"/>
</dbReference>
<dbReference type="FunFam" id="2.30.30.30:FF:000003">
    <property type="entry name" value="Elongation factor P"/>
    <property type="match status" value="1"/>
</dbReference>
<dbReference type="FunFam" id="2.40.50.140:FF:000004">
    <property type="entry name" value="Elongation factor P"/>
    <property type="match status" value="1"/>
</dbReference>
<dbReference type="FunFam" id="2.40.50.140:FF:000009">
    <property type="entry name" value="Elongation factor P"/>
    <property type="match status" value="1"/>
</dbReference>
<dbReference type="Gene3D" id="2.30.30.30">
    <property type="match status" value="1"/>
</dbReference>
<dbReference type="Gene3D" id="2.40.50.140">
    <property type="entry name" value="Nucleic acid-binding proteins"/>
    <property type="match status" value="2"/>
</dbReference>
<dbReference type="HAMAP" id="MF_00141">
    <property type="entry name" value="EF_P"/>
    <property type="match status" value="1"/>
</dbReference>
<dbReference type="InterPro" id="IPR015365">
    <property type="entry name" value="Elong-fact-P_C"/>
</dbReference>
<dbReference type="InterPro" id="IPR012340">
    <property type="entry name" value="NA-bd_OB-fold"/>
</dbReference>
<dbReference type="InterPro" id="IPR014722">
    <property type="entry name" value="Rib_uL2_dom2"/>
</dbReference>
<dbReference type="InterPro" id="IPR020599">
    <property type="entry name" value="Transl_elong_fac_P/YeiP"/>
</dbReference>
<dbReference type="InterPro" id="IPR013185">
    <property type="entry name" value="Transl_elong_KOW-like"/>
</dbReference>
<dbReference type="InterPro" id="IPR001059">
    <property type="entry name" value="Transl_elong_P/YeiP_cen"/>
</dbReference>
<dbReference type="InterPro" id="IPR013852">
    <property type="entry name" value="Transl_elong_P/YeiP_CS"/>
</dbReference>
<dbReference type="InterPro" id="IPR011768">
    <property type="entry name" value="Transl_elongation_fac_P"/>
</dbReference>
<dbReference type="InterPro" id="IPR008991">
    <property type="entry name" value="Translation_prot_SH3-like_sf"/>
</dbReference>
<dbReference type="NCBIfam" id="TIGR00038">
    <property type="entry name" value="efp"/>
    <property type="match status" value="1"/>
</dbReference>
<dbReference type="NCBIfam" id="NF001810">
    <property type="entry name" value="PRK00529.1"/>
    <property type="match status" value="1"/>
</dbReference>
<dbReference type="PANTHER" id="PTHR30053">
    <property type="entry name" value="ELONGATION FACTOR P"/>
    <property type="match status" value="1"/>
</dbReference>
<dbReference type="PANTHER" id="PTHR30053:SF12">
    <property type="entry name" value="ELONGATION FACTOR P (EF-P) FAMILY PROTEIN"/>
    <property type="match status" value="1"/>
</dbReference>
<dbReference type="Pfam" id="PF01132">
    <property type="entry name" value="EFP"/>
    <property type="match status" value="1"/>
</dbReference>
<dbReference type="Pfam" id="PF08207">
    <property type="entry name" value="EFP_N"/>
    <property type="match status" value="1"/>
</dbReference>
<dbReference type="Pfam" id="PF09285">
    <property type="entry name" value="Elong-fact-P_C"/>
    <property type="match status" value="1"/>
</dbReference>
<dbReference type="PIRSF" id="PIRSF005901">
    <property type="entry name" value="EF-P"/>
    <property type="match status" value="1"/>
</dbReference>
<dbReference type="SMART" id="SM01185">
    <property type="entry name" value="EFP"/>
    <property type="match status" value="1"/>
</dbReference>
<dbReference type="SMART" id="SM00841">
    <property type="entry name" value="Elong-fact-P_C"/>
    <property type="match status" value="1"/>
</dbReference>
<dbReference type="SUPFAM" id="SSF50249">
    <property type="entry name" value="Nucleic acid-binding proteins"/>
    <property type="match status" value="2"/>
</dbReference>
<dbReference type="SUPFAM" id="SSF50104">
    <property type="entry name" value="Translation proteins SH3-like domain"/>
    <property type="match status" value="1"/>
</dbReference>
<dbReference type="PROSITE" id="PS01275">
    <property type="entry name" value="EFP"/>
    <property type="match status" value="1"/>
</dbReference>
<organism>
    <name type="scientific">Streptococcus pyogenes serotype M3 (strain SSI-1)</name>
    <dbReference type="NCBI Taxonomy" id="193567"/>
    <lineage>
        <taxon>Bacteria</taxon>
        <taxon>Bacillati</taxon>
        <taxon>Bacillota</taxon>
        <taxon>Bacilli</taxon>
        <taxon>Lactobacillales</taxon>
        <taxon>Streptococcaceae</taxon>
        <taxon>Streptococcus</taxon>
    </lineage>
</organism>
<comment type="function">
    <text evidence="1">Involved in peptide bond synthesis. Stimulates efficient translation and peptide-bond synthesis on native or reconstituted 70S ribosomes in vitro. Probably functions indirectly by altering the affinity of the ribosome for aminoacyl-tRNA, thus increasing their reactivity as acceptors for peptidyl transferase (By similarity).</text>
</comment>
<comment type="pathway">
    <text>Protein biosynthesis; polypeptide chain elongation.</text>
</comment>
<comment type="subcellular location">
    <subcellularLocation>
        <location evidence="1">Cytoplasm</location>
    </subcellularLocation>
</comment>
<comment type="similarity">
    <text evidence="2">Belongs to the elongation factor P family.</text>
</comment>
<accession>P0DA87</accession>
<accession>P68774</accession>
<accession>P82459</accession>
<evidence type="ECO:0000250" key="1"/>
<evidence type="ECO:0000305" key="2"/>
<reference key="1">
    <citation type="journal article" date="2003" name="Genome Res.">
        <title>Genome sequence of an M3 strain of Streptococcus pyogenes reveals a large-scale genomic rearrangement in invasive strains and new insights into phage evolution.</title>
        <authorList>
            <person name="Nakagawa I."/>
            <person name="Kurokawa K."/>
            <person name="Yamashita A."/>
            <person name="Nakata M."/>
            <person name="Tomiyasu Y."/>
            <person name="Okahashi N."/>
            <person name="Kawabata S."/>
            <person name="Yamazaki K."/>
            <person name="Shiba T."/>
            <person name="Yasunaga T."/>
            <person name="Hayashi H."/>
            <person name="Hattori M."/>
            <person name="Hamada S."/>
        </authorList>
    </citation>
    <scope>NUCLEOTIDE SEQUENCE [LARGE SCALE GENOMIC DNA]</scope>
    <source>
        <strain>SSI-1</strain>
    </source>
</reference>
<name>EFP_STRPQ</name>
<protein>
    <recommendedName>
        <fullName>Elongation factor P</fullName>
        <shortName>EF-P</shortName>
    </recommendedName>
</protein>
<proteinExistence type="inferred from homology"/>
<keyword id="KW-0963">Cytoplasm</keyword>
<keyword id="KW-0251">Elongation factor</keyword>
<keyword id="KW-0648">Protein biosynthesis</keyword>